<evidence type="ECO:0000305" key="1"/>
<sequence>MSDLRRKGWWNVPDYFHSPLVFDMEEDKEDYIFGPHDEYLHTLEVHSNTLIQLERWFTPTGQTRVTVVGPLKARLWVMDMIRKVGSKNNLDQIKGKMMLLQIRDHPLRDRDLELHPESGSSLWITTMNDTTFVEVPHFSRFPLTVAWLFCGFVRILGIHNFADLHW</sequence>
<accession>Q4KL78</accession>
<feature type="chain" id="PRO_0000311432" description="KH homology domain-containing protein 1C">
    <location>
        <begin position="1"/>
        <end position="166"/>
    </location>
</feature>
<feature type="domain" description="KH; atypical">
    <location>
        <begin position="19"/>
        <end position="78"/>
    </location>
</feature>
<dbReference type="EMBL" id="BC099381">
    <property type="protein sequence ID" value="AAH99381.1"/>
    <property type="molecule type" value="mRNA"/>
</dbReference>
<dbReference type="CCDS" id="CCDS48228.1"/>
<dbReference type="RefSeq" id="NP_001029076.1">
    <property type="nucleotide sequence ID" value="NM_001033904.1"/>
</dbReference>
<dbReference type="FunCoup" id="Q4KL78">
    <property type="interactions" value="67"/>
</dbReference>
<dbReference type="PaxDb" id="10090-ENSMUSP00000068792"/>
<dbReference type="Ensembl" id="ENSMUST00000070223.6">
    <property type="protein sequence ID" value="ENSMUSP00000068792.6"/>
    <property type="gene ID" value="ENSMUSG00000041722.8"/>
</dbReference>
<dbReference type="GeneID" id="433278"/>
<dbReference type="KEGG" id="mmu:433278"/>
<dbReference type="UCSC" id="uc007alo.1">
    <property type="organism name" value="mouse"/>
</dbReference>
<dbReference type="AGR" id="MGI:3583007"/>
<dbReference type="CTD" id="433278"/>
<dbReference type="MGI" id="MGI:3583007">
    <property type="gene designation" value="Khdc1c"/>
</dbReference>
<dbReference type="VEuPathDB" id="HostDB:ENSMUSG00000041722"/>
<dbReference type="eggNOG" id="ENOG502TCCK">
    <property type="taxonomic scope" value="Eukaryota"/>
</dbReference>
<dbReference type="GeneTree" id="ENSGT00940000154353"/>
<dbReference type="HOGENOM" id="CLU_102222_1_0_1"/>
<dbReference type="InParanoid" id="Q4KL78"/>
<dbReference type="OMA" id="QDSCRHD"/>
<dbReference type="OrthoDB" id="9835352at2759"/>
<dbReference type="PhylomeDB" id="Q4KL78"/>
<dbReference type="TreeFam" id="TF337964"/>
<dbReference type="BioGRID-ORCS" id="433278">
    <property type="hits" value="1 hit in 43 CRISPR screens"/>
</dbReference>
<dbReference type="ChiTaRS" id="Khdc1b">
    <property type="organism name" value="mouse"/>
</dbReference>
<dbReference type="PRO" id="PR:Q4KL78"/>
<dbReference type="Proteomes" id="UP000000589">
    <property type="component" value="Chromosome 1"/>
</dbReference>
<dbReference type="RNAct" id="Q4KL78">
    <property type="molecule type" value="protein"/>
</dbReference>
<dbReference type="Bgee" id="ENSMUSG00000041722">
    <property type="expression patterns" value="Expressed in animal zygote and 6 other cell types or tissues"/>
</dbReference>
<dbReference type="GO" id="GO:0003723">
    <property type="term" value="F:RNA binding"/>
    <property type="evidence" value="ECO:0007669"/>
    <property type="project" value="UniProtKB-KW"/>
</dbReference>
<dbReference type="CDD" id="cd12795">
    <property type="entry name" value="FILIA_N_like"/>
    <property type="match status" value="1"/>
</dbReference>
<dbReference type="FunFam" id="3.30.1370.10:FF:000157">
    <property type="entry name" value="KH homology domain-containing protein 1C"/>
    <property type="match status" value="1"/>
</dbReference>
<dbReference type="Gene3D" id="3.30.1370.10">
    <property type="entry name" value="K Homology domain, type 1"/>
    <property type="match status" value="1"/>
</dbReference>
<dbReference type="InterPro" id="IPR036612">
    <property type="entry name" value="KH_dom_type_1_sf"/>
</dbReference>
<dbReference type="InterPro" id="IPR031952">
    <property type="entry name" value="MOEP19_KH-like"/>
</dbReference>
<dbReference type="PANTHER" id="PTHR31368">
    <property type="entry name" value="DEVELOPMENT PLURPOTENCY-ASSOCIATED PROTEIN 1/5 FAMILY MEMBER"/>
    <property type="match status" value="1"/>
</dbReference>
<dbReference type="PANTHER" id="PTHR31368:SF6">
    <property type="entry name" value="KH HOMOLOGY DOMAIN-CONTAINING PROTEIN 1"/>
    <property type="match status" value="1"/>
</dbReference>
<dbReference type="Pfam" id="PF16005">
    <property type="entry name" value="MOEP19"/>
    <property type="match status" value="1"/>
</dbReference>
<organism>
    <name type="scientific">Mus musculus</name>
    <name type="common">Mouse</name>
    <dbReference type="NCBI Taxonomy" id="10090"/>
    <lineage>
        <taxon>Eukaryota</taxon>
        <taxon>Metazoa</taxon>
        <taxon>Chordata</taxon>
        <taxon>Craniata</taxon>
        <taxon>Vertebrata</taxon>
        <taxon>Euteleostomi</taxon>
        <taxon>Mammalia</taxon>
        <taxon>Eutheria</taxon>
        <taxon>Euarchontoglires</taxon>
        <taxon>Glires</taxon>
        <taxon>Rodentia</taxon>
        <taxon>Myomorpha</taxon>
        <taxon>Muroidea</taxon>
        <taxon>Muridae</taxon>
        <taxon>Murinae</taxon>
        <taxon>Mus</taxon>
        <taxon>Mus</taxon>
    </lineage>
</organism>
<proteinExistence type="evidence at transcript level"/>
<comment type="similarity">
    <text evidence="1">Belongs to the KHDC1 family.</text>
</comment>
<protein>
    <recommendedName>
        <fullName>KH homology domain-containing protein 1C</fullName>
    </recommendedName>
</protein>
<reference key="1">
    <citation type="journal article" date="2004" name="Genome Res.">
        <title>The status, quality, and expansion of the NIH full-length cDNA project: the Mammalian Gene Collection (MGC).</title>
        <authorList>
            <consortium name="The MGC Project Team"/>
        </authorList>
    </citation>
    <scope>NUCLEOTIDE SEQUENCE [LARGE SCALE MRNA]</scope>
    <source>
        <tissue>Oocyte</tissue>
    </source>
</reference>
<name>KHD1C_MOUSE</name>
<gene>
    <name type="primary">Khdc1c</name>
</gene>
<keyword id="KW-1185">Reference proteome</keyword>
<keyword id="KW-0694">RNA-binding</keyword>